<name>SFSA_YERPE</name>
<keyword id="KW-1185">Reference proteome</keyword>
<sequence length="245" mass="27696">MLQFTPPLQPATLILRYKRFLADIVTPAGEALTIHCANTGAMTGCATPGDTIWYSTSDNPKRKYPQSWELTQTQTGDWICVNTMRANELVNLAIEKNQIAELSGYNFVRKEVKYGEENSRIDLLLQAEDRRDCYIEVKSVTLLQQQCGYFPDAVTLRGQKHLRELQNRVVNGHRAVLFFAVLHTGIKQVAPARHIDRRYAELLVQAQQAGVEVICYGFQLSPDGIELNTRLPLLLDEMLSSENAE</sequence>
<protein>
    <recommendedName>
        <fullName evidence="1">Sugar fermentation stimulation protein homolog</fullName>
    </recommendedName>
</protein>
<evidence type="ECO:0000255" key="1">
    <source>
        <dbReference type="HAMAP-Rule" id="MF_00095"/>
    </source>
</evidence>
<evidence type="ECO:0000305" key="2"/>
<dbReference type="EMBL" id="AL590842">
    <property type="protein sequence ID" value="CAL21985.1"/>
    <property type="molecule type" value="Genomic_DNA"/>
</dbReference>
<dbReference type="EMBL" id="AE009952">
    <property type="protein sequence ID" value="AAM84379.1"/>
    <property type="status" value="ALT_INIT"/>
    <property type="molecule type" value="Genomic_DNA"/>
</dbReference>
<dbReference type="EMBL" id="AE017042">
    <property type="protein sequence ID" value="AAS60564.1"/>
    <property type="status" value="ALT_INIT"/>
    <property type="molecule type" value="Genomic_DNA"/>
</dbReference>
<dbReference type="PIR" id="AF0412">
    <property type="entry name" value="AF0412"/>
</dbReference>
<dbReference type="RefSeq" id="WP_002228221.1">
    <property type="nucleotide sequence ID" value="NZ_WUCM01000008.1"/>
</dbReference>
<dbReference type="RefSeq" id="YP_002348288.1">
    <property type="nucleotide sequence ID" value="NC_003143.1"/>
</dbReference>
<dbReference type="SMR" id="P58431"/>
<dbReference type="STRING" id="214092.YPO3396"/>
<dbReference type="PaxDb" id="214092-YPO3396"/>
<dbReference type="DNASU" id="1145739"/>
<dbReference type="EnsemblBacteria" id="AAS60564">
    <property type="protein sequence ID" value="AAS60564"/>
    <property type="gene ID" value="YP_0289"/>
</dbReference>
<dbReference type="GeneID" id="57975313"/>
<dbReference type="KEGG" id="ype:YPO3396"/>
<dbReference type="KEGG" id="ypj:CH55_1976"/>
<dbReference type="KEGG" id="ypk:y0792"/>
<dbReference type="KEGG" id="ypl:CH46_1694"/>
<dbReference type="KEGG" id="ypm:YP_0289"/>
<dbReference type="KEGG" id="ypv:BZ15_126"/>
<dbReference type="KEGG" id="ypw:CH59_2652"/>
<dbReference type="PATRIC" id="fig|214092.21.peg.3879"/>
<dbReference type="eggNOG" id="COG1489">
    <property type="taxonomic scope" value="Bacteria"/>
</dbReference>
<dbReference type="HOGENOM" id="CLU_052299_2_0_6"/>
<dbReference type="OMA" id="CANTGPM"/>
<dbReference type="OrthoDB" id="9802365at2"/>
<dbReference type="Proteomes" id="UP000000815">
    <property type="component" value="Chromosome"/>
</dbReference>
<dbReference type="Proteomes" id="UP000001019">
    <property type="component" value="Chromosome"/>
</dbReference>
<dbReference type="Proteomes" id="UP000002490">
    <property type="component" value="Chromosome"/>
</dbReference>
<dbReference type="GO" id="GO:0003677">
    <property type="term" value="F:DNA binding"/>
    <property type="evidence" value="ECO:0000318"/>
    <property type="project" value="GO_Central"/>
</dbReference>
<dbReference type="CDD" id="cd22359">
    <property type="entry name" value="SfsA-like_bacterial"/>
    <property type="match status" value="1"/>
</dbReference>
<dbReference type="FunFam" id="2.40.50.580:FF:000001">
    <property type="entry name" value="Sugar fermentation stimulation protein A"/>
    <property type="match status" value="1"/>
</dbReference>
<dbReference type="FunFam" id="3.40.1350.60:FF:000001">
    <property type="entry name" value="Sugar fermentation stimulation protein A"/>
    <property type="match status" value="1"/>
</dbReference>
<dbReference type="Gene3D" id="2.40.50.580">
    <property type="match status" value="1"/>
</dbReference>
<dbReference type="Gene3D" id="3.40.1350.60">
    <property type="match status" value="1"/>
</dbReference>
<dbReference type="HAMAP" id="MF_00095">
    <property type="entry name" value="SfsA"/>
    <property type="match status" value="1"/>
</dbReference>
<dbReference type="InterPro" id="IPR005224">
    <property type="entry name" value="SfsA"/>
</dbReference>
<dbReference type="InterPro" id="IPR040452">
    <property type="entry name" value="SfsA_C"/>
</dbReference>
<dbReference type="InterPro" id="IPR041465">
    <property type="entry name" value="SfsA_N"/>
</dbReference>
<dbReference type="NCBIfam" id="TIGR00230">
    <property type="entry name" value="sfsA"/>
    <property type="match status" value="1"/>
</dbReference>
<dbReference type="PANTHER" id="PTHR30545">
    <property type="entry name" value="SUGAR FERMENTATION STIMULATION PROTEIN A"/>
    <property type="match status" value="1"/>
</dbReference>
<dbReference type="PANTHER" id="PTHR30545:SF2">
    <property type="entry name" value="SUGAR FERMENTATION STIMULATION PROTEIN A"/>
    <property type="match status" value="1"/>
</dbReference>
<dbReference type="Pfam" id="PF03749">
    <property type="entry name" value="SfsA"/>
    <property type="match status" value="1"/>
</dbReference>
<dbReference type="Pfam" id="PF17746">
    <property type="entry name" value="SfsA_N"/>
    <property type="match status" value="1"/>
</dbReference>
<proteinExistence type="inferred from homology"/>
<accession>P58431</accession>
<accession>Q0WBQ0</accession>
<comment type="similarity">
    <text evidence="1">Belongs to the SfsA family.</text>
</comment>
<comment type="sequence caution" evidence="2">
    <conflict type="erroneous initiation">
        <sequence resource="EMBL-CDS" id="AAM84379"/>
    </conflict>
</comment>
<comment type="sequence caution" evidence="2">
    <conflict type="erroneous initiation">
        <sequence resource="EMBL-CDS" id="AAS60564"/>
    </conflict>
</comment>
<feature type="chain" id="PRO_0000152319" description="Sugar fermentation stimulation protein homolog">
    <location>
        <begin position="1"/>
        <end position="245"/>
    </location>
</feature>
<reference key="1">
    <citation type="journal article" date="2001" name="Nature">
        <title>Genome sequence of Yersinia pestis, the causative agent of plague.</title>
        <authorList>
            <person name="Parkhill J."/>
            <person name="Wren B.W."/>
            <person name="Thomson N.R."/>
            <person name="Titball R.W."/>
            <person name="Holden M.T.G."/>
            <person name="Prentice M.B."/>
            <person name="Sebaihia M."/>
            <person name="James K.D."/>
            <person name="Churcher C.M."/>
            <person name="Mungall K.L."/>
            <person name="Baker S."/>
            <person name="Basham D."/>
            <person name="Bentley S.D."/>
            <person name="Brooks K."/>
            <person name="Cerdeno-Tarraga A.-M."/>
            <person name="Chillingworth T."/>
            <person name="Cronin A."/>
            <person name="Davies R.M."/>
            <person name="Davis P."/>
            <person name="Dougan G."/>
            <person name="Feltwell T."/>
            <person name="Hamlin N."/>
            <person name="Holroyd S."/>
            <person name="Jagels K."/>
            <person name="Karlyshev A.V."/>
            <person name="Leather S."/>
            <person name="Moule S."/>
            <person name="Oyston P.C.F."/>
            <person name="Quail M.A."/>
            <person name="Rutherford K.M."/>
            <person name="Simmonds M."/>
            <person name="Skelton J."/>
            <person name="Stevens K."/>
            <person name="Whitehead S."/>
            <person name="Barrell B.G."/>
        </authorList>
    </citation>
    <scope>NUCLEOTIDE SEQUENCE [LARGE SCALE GENOMIC DNA]</scope>
    <source>
        <strain>CO-92 / Biovar Orientalis</strain>
    </source>
</reference>
<reference key="2">
    <citation type="journal article" date="2002" name="J. Bacteriol.">
        <title>Genome sequence of Yersinia pestis KIM.</title>
        <authorList>
            <person name="Deng W."/>
            <person name="Burland V."/>
            <person name="Plunkett G. III"/>
            <person name="Boutin A."/>
            <person name="Mayhew G.F."/>
            <person name="Liss P."/>
            <person name="Perna N.T."/>
            <person name="Rose D.J."/>
            <person name="Mau B."/>
            <person name="Zhou S."/>
            <person name="Schwartz D.C."/>
            <person name="Fetherston J.D."/>
            <person name="Lindler L.E."/>
            <person name="Brubaker R.R."/>
            <person name="Plano G.V."/>
            <person name="Straley S.C."/>
            <person name="McDonough K.A."/>
            <person name="Nilles M.L."/>
            <person name="Matson J.S."/>
            <person name="Blattner F.R."/>
            <person name="Perry R.D."/>
        </authorList>
    </citation>
    <scope>NUCLEOTIDE SEQUENCE [LARGE SCALE GENOMIC DNA]</scope>
    <source>
        <strain>KIM10+ / Biovar Mediaevalis</strain>
    </source>
</reference>
<reference key="3">
    <citation type="journal article" date="2004" name="DNA Res.">
        <title>Complete genome sequence of Yersinia pestis strain 91001, an isolate avirulent to humans.</title>
        <authorList>
            <person name="Song Y."/>
            <person name="Tong Z."/>
            <person name="Wang J."/>
            <person name="Wang L."/>
            <person name="Guo Z."/>
            <person name="Han Y."/>
            <person name="Zhang J."/>
            <person name="Pei D."/>
            <person name="Zhou D."/>
            <person name="Qin H."/>
            <person name="Pang X."/>
            <person name="Han Y."/>
            <person name="Zhai J."/>
            <person name="Li M."/>
            <person name="Cui B."/>
            <person name="Qi Z."/>
            <person name="Jin L."/>
            <person name="Dai R."/>
            <person name="Chen F."/>
            <person name="Li S."/>
            <person name="Ye C."/>
            <person name="Du Z."/>
            <person name="Lin W."/>
            <person name="Wang J."/>
            <person name="Yu J."/>
            <person name="Yang H."/>
            <person name="Wang J."/>
            <person name="Huang P."/>
            <person name="Yang R."/>
        </authorList>
    </citation>
    <scope>NUCLEOTIDE SEQUENCE [LARGE SCALE GENOMIC DNA]</scope>
    <source>
        <strain>91001 / Biovar Mediaevalis</strain>
    </source>
</reference>
<organism>
    <name type="scientific">Yersinia pestis</name>
    <dbReference type="NCBI Taxonomy" id="632"/>
    <lineage>
        <taxon>Bacteria</taxon>
        <taxon>Pseudomonadati</taxon>
        <taxon>Pseudomonadota</taxon>
        <taxon>Gammaproteobacteria</taxon>
        <taxon>Enterobacterales</taxon>
        <taxon>Yersiniaceae</taxon>
        <taxon>Yersinia</taxon>
    </lineage>
</organism>
<gene>
    <name evidence="1" type="primary">sfsA</name>
    <name type="ordered locus">YPO3396</name>
    <name type="ordered locus">y0792</name>
    <name type="ordered locus">YP_0289</name>
</gene>